<proteinExistence type="inferred from homology"/>
<gene>
    <name evidence="1" type="primary">arnD</name>
    <name type="ordered locus">c2798</name>
</gene>
<dbReference type="EC" id="3.5.1.n3" evidence="1"/>
<dbReference type="EMBL" id="AE014075">
    <property type="protein sequence ID" value="AAN81252.1"/>
    <property type="molecule type" value="Genomic_DNA"/>
</dbReference>
<dbReference type="RefSeq" id="WP_000169712.1">
    <property type="nucleotide sequence ID" value="NZ_CP051263.1"/>
</dbReference>
<dbReference type="SMR" id="Q8FFM0"/>
<dbReference type="STRING" id="199310.c2798"/>
<dbReference type="KEGG" id="ecc:c2798"/>
<dbReference type="eggNOG" id="COG0726">
    <property type="taxonomic scope" value="Bacteria"/>
</dbReference>
<dbReference type="HOGENOM" id="CLU_084199_0_0_6"/>
<dbReference type="BioCyc" id="ECOL199310:C2798-MONOMER"/>
<dbReference type="UniPathway" id="UPA00030"/>
<dbReference type="UniPathway" id="UPA00036">
    <property type="reaction ID" value="UER00496"/>
</dbReference>
<dbReference type="Proteomes" id="UP000001410">
    <property type="component" value="Chromosome"/>
</dbReference>
<dbReference type="GO" id="GO:0016020">
    <property type="term" value="C:membrane"/>
    <property type="evidence" value="ECO:0007669"/>
    <property type="project" value="GOC"/>
</dbReference>
<dbReference type="GO" id="GO:0016811">
    <property type="term" value="F:hydrolase activity, acting on carbon-nitrogen (but not peptide) bonds, in linear amides"/>
    <property type="evidence" value="ECO:0007669"/>
    <property type="project" value="UniProtKB-UniRule"/>
</dbReference>
<dbReference type="GO" id="GO:0036108">
    <property type="term" value="P:4-amino-4-deoxy-alpha-L-arabinopyranosyl undecaprenyl phosphate biosynthetic process"/>
    <property type="evidence" value="ECO:0007669"/>
    <property type="project" value="UniProtKB-UniRule"/>
</dbReference>
<dbReference type="GO" id="GO:0009245">
    <property type="term" value="P:lipid A biosynthetic process"/>
    <property type="evidence" value="ECO:0007669"/>
    <property type="project" value="UniProtKB-UniRule"/>
</dbReference>
<dbReference type="GO" id="GO:0009103">
    <property type="term" value="P:lipopolysaccharide biosynthetic process"/>
    <property type="evidence" value="ECO:0007669"/>
    <property type="project" value="UniProtKB-UniRule"/>
</dbReference>
<dbReference type="GO" id="GO:0046677">
    <property type="term" value="P:response to antibiotic"/>
    <property type="evidence" value="ECO:0007669"/>
    <property type="project" value="UniProtKB-KW"/>
</dbReference>
<dbReference type="CDD" id="cd10939">
    <property type="entry name" value="CE4_ArnD"/>
    <property type="match status" value="1"/>
</dbReference>
<dbReference type="Gene3D" id="3.20.20.370">
    <property type="entry name" value="Glycoside hydrolase/deacetylase"/>
    <property type="match status" value="1"/>
</dbReference>
<dbReference type="HAMAP" id="MF_01870">
    <property type="entry name" value="ArnD"/>
    <property type="match status" value="1"/>
</dbReference>
<dbReference type="InterPro" id="IPR023557">
    <property type="entry name" value="ArnD"/>
</dbReference>
<dbReference type="InterPro" id="IPR011330">
    <property type="entry name" value="Glyco_hydro/deAcase_b/a-brl"/>
</dbReference>
<dbReference type="InterPro" id="IPR002509">
    <property type="entry name" value="NODB_dom"/>
</dbReference>
<dbReference type="InterPro" id="IPR050248">
    <property type="entry name" value="Polysacc_deacetylase_ArnD"/>
</dbReference>
<dbReference type="NCBIfam" id="NF011923">
    <property type="entry name" value="PRK15394.1"/>
    <property type="match status" value="1"/>
</dbReference>
<dbReference type="PANTHER" id="PTHR10587:SF137">
    <property type="entry name" value="4-DEOXY-4-FORMAMIDO-L-ARABINOSE-PHOSPHOUNDECAPRENOL DEFORMYLASE ARND-RELATED"/>
    <property type="match status" value="1"/>
</dbReference>
<dbReference type="PANTHER" id="PTHR10587">
    <property type="entry name" value="GLYCOSYL TRANSFERASE-RELATED"/>
    <property type="match status" value="1"/>
</dbReference>
<dbReference type="Pfam" id="PF01522">
    <property type="entry name" value="Polysacc_deac_1"/>
    <property type="match status" value="1"/>
</dbReference>
<dbReference type="SUPFAM" id="SSF88713">
    <property type="entry name" value="Glycoside hydrolase/deacetylase"/>
    <property type="match status" value="1"/>
</dbReference>
<dbReference type="PROSITE" id="PS51677">
    <property type="entry name" value="NODB"/>
    <property type="match status" value="1"/>
</dbReference>
<evidence type="ECO:0000255" key="1">
    <source>
        <dbReference type="HAMAP-Rule" id="MF_01870"/>
    </source>
</evidence>
<keyword id="KW-0046">Antibiotic resistance</keyword>
<keyword id="KW-0378">Hydrolase</keyword>
<keyword id="KW-0441">Lipid A biosynthesis</keyword>
<keyword id="KW-0444">Lipid biosynthesis</keyword>
<keyword id="KW-0443">Lipid metabolism</keyword>
<keyword id="KW-0448">Lipopolysaccharide biosynthesis</keyword>
<keyword id="KW-1185">Reference proteome</keyword>
<comment type="function">
    <text evidence="1">Catalyzes the deformylation of 4-deoxy-4-formamido-L-arabinose-phosphoundecaprenol to 4-amino-4-deoxy-L-arabinose-phosphoundecaprenol. The modified arabinose is attached to lipid A and is required for resistance to polymyxin and cationic antimicrobial peptides.</text>
</comment>
<comment type="catalytic activity">
    <reaction evidence="1">
        <text>4-deoxy-4-formamido-alpha-L-arabinopyranosyl di-trans,octa-cis-undecaprenyl phosphate + H2O = 4-amino-4-deoxy-alpha-L-arabinopyranosyl di-trans,octa-cis-undecaprenyl phosphate + formate</text>
        <dbReference type="Rhea" id="RHEA:27734"/>
        <dbReference type="ChEBI" id="CHEBI:15377"/>
        <dbReference type="ChEBI" id="CHEBI:15740"/>
        <dbReference type="ChEBI" id="CHEBI:58909"/>
        <dbReference type="ChEBI" id="CHEBI:60463"/>
        <dbReference type="EC" id="3.5.1.n3"/>
    </reaction>
</comment>
<comment type="pathway">
    <text evidence="1">Glycolipid biosynthesis; 4-amino-4-deoxy-alpha-L-arabinose undecaprenyl phosphate biosynthesis; 4-amino-4-deoxy-alpha-L-arabinose undecaprenyl phosphate from UDP-4-deoxy-4-formamido-beta-L-arabinose and undecaprenyl phosphate: step 2/2.</text>
</comment>
<comment type="pathway">
    <text evidence="1">Bacterial outer membrane biogenesis; lipopolysaccharide biosynthesis.</text>
</comment>
<comment type="similarity">
    <text evidence="1">Belongs to the polysaccharide deacetylase family. ArnD deformylase subfamily.</text>
</comment>
<sequence>MTKVGLRIDVDTFRGTREGVPRLLEILSKHNIQASIFFSVGPDNMGRHLWRLVKPQFLWKMLRSNAASLYGWDILLAGTAWPGKEIGHANADIIREAAKHHEVGLHAWDHHAWQAHSGNWDRQTMIDDIARGLRTLEEIIGQPVTCSAAAGWRADQQVIEAKEAFHLRYNSDCRGAMPFRPLLESGTPGTAQIPVTLPTWDEVIGRDVKAEDFNGWLLNRIQRDKGTPVYTIHAEVEGCAYQHNFVDLLKRAAQEGVTFCPLSELLSGTLPLGQVVRGNIAGREGWLGCQQIAGSH</sequence>
<name>ARND_ECOL6</name>
<feature type="chain" id="PRO_0000383508" description="Probable 4-deoxy-4-formamido-L-arabinose-phosphoundecaprenol deformylase ArnD">
    <location>
        <begin position="1"/>
        <end position="296"/>
    </location>
</feature>
<feature type="domain" description="NodB homology" evidence="1">
    <location>
        <begin position="2"/>
        <end position="260"/>
    </location>
</feature>
<reference key="1">
    <citation type="journal article" date="2002" name="Proc. Natl. Acad. Sci. U.S.A.">
        <title>Extensive mosaic structure revealed by the complete genome sequence of uropathogenic Escherichia coli.</title>
        <authorList>
            <person name="Welch R.A."/>
            <person name="Burland V."/>
            <person name="Plunkett G. III"/>
            <person name="Redford P."/>
            <person name="Roesch P."/>
            <person name="Rasko D."/>
            <person name="Buckles E.L."/>
            <person name="Liou S.-R."/>
            <person name="Boutin A."/>
            <person name="Hackett J."/>
            <person name="Stroud D."/>
            <person name="Mayhew G.F."/>
            <person name="Rose D.J."/>
            <person name="Zhou S."/>
            <person name="Schwartz D.C."/>
            <person name="Perna N.T."/>
            <person name="Mobley H.L.T."/>
            <person name="Donnenberg M.S."/>
            <person name="Blattner F.R."/>
        </authorList>
    </citation>
    <scope>NUCLEOTIDE SEQUENCE [LARGE SCALE GENOMIC DNA]</scope>
    <source>
        <strain>CFT073 / ATCC 700928 / UPEC</strain>
    </source>
</reference>
<accession>Q8FFM0</accession>
<protein>
    <recommendedName>
        <fullName evidence="1">Probable 4-deoxy-4-formamido-L-arabinose-phosphoundecaprenol deformylase ArnD</fullName>
        <ecNumber evidence="1">3.5.1.n3</ecNumber>
    </recommendedName>
</protein>
<organism>
    <name type="scientific">Escherichia coli O6:H1 (strain CFT073 / ATCC 700928 / UPEC)</name>
    <dbReference type="NCBI Taxonomy" id="199310"/>
    <lineage>
        <taxon>Bacteria</taxon>
        <taxon>Pseudomonadati</taxon>
        <taxon>Pseudomonadota</taxon>
        <taxon>Gammaproteobacteria</taxon>
        <taxon>Enterobacterales</taxon>
        <taxon>Enterobacteriaceae</taxon>
        <taxon>Escherichia</taxon>
    </lineage>
</organism>